<reference key="1">
    <citation type="submission" date="2006-12" db="EMBL/GenBank/DDBJ databases">
        <title>Complete sequence of Chlorobium phaeobacteroides DSM 266.</title>
        <authorList>
            <consortium name="US DOE Joint Genome Institute"/>
            <person name="Copeland A."/>
            <person name="Lucas S."/>
            <person name="Lapidus A."/>
            <person name="Barry K."/>
            <person name="Detter J.C."/>
            <person name="Glavina del Rio T."/>
            <person name="Hammon N."/>
            <person name="Israni S."/>
            <person name="Pitluck S."/>
            <person name="Goltsman E."/>
            <person name="Schmutz J."/>
            <person name="Larimer F."/>
            <person name="Land M."/>
            <person name="Hauser L."/>
            <person name="Mikhailova N."/>
            <person name="Li T."/>
            <person name="Overmann J."/>
            <person name="Bryant D.A."/>
            <person name="Richardson P."/>
        </authorList>
    </citation>
    <scope>NUCLEOTIDE SEQUENCE [LARGE SCALE GENOMIC DNA]</scope>
    <source>
        <strain>DSM 266 / SMG 266 / 2430</strain>
    </source>
</reference>
<accession>A1BDG1</accession>
<sequence>MKLHLLKSKIHNARVTSGDLEYEGSITIDQELLLLAEMIPNEKVLVVNNNNGERFETYIINGEPGSRVIQLNGAAARCALPGDEIIIMTFAVMDEKKARTFQPMVLIVDHLNNPKRRHRIGQEDEQLSSSI</sequence>
<proteinExistence type="inferred from homology"/>
<keyword id="KW-0068">Autocatalytic cleavage</keyword>
<keyword id="KW-0963">Cytoplasm</keyword>
<keyword id="KW-0210">Decarboxylase</keyword>
<keyword id="KW-0456">Lyase</keyword>
<keyword id="KW-0566">Pantothenate biosynthesis</keyword>
<keyword id="KW-0670">Pyruvate</keyword>
<keyword id="KW-1185">Reference proteome</keyword>
<keyword id="KW-0704">Schiff base</keyword>
<keyword id="KW-0865">Zymogen</keyword>
<name>PAND_CHLPD</name>
<gene>
    <name evidence="1" type="primary">panD</name>
    <name type="ordered locus">Cpha266_0379</name>
</gene>
<dbReference type="EC" id="4.1.1.11" evidence="1"/>
<dbReference type="EMBL" id="CP000492">
    <property type="protein sequence ID" value="ABL64438.1"/>
    <property type="molecule type" value="Genomic_DNA"/>
</dbReference>
<dbReference type="RefSeq" id="WP_011744271.1">
    <property type="nucleotide sequence ID" value="NC_008639.1"/>
</dbReference>
<dbReference type="SMR" id="A1BDG1"/>
<dbReference type="STRING" id="290317.Cpha266_0379"/>
<dbReference type="KEGG" id="cph:Cpha266_0379"/>
<dbReference type="eggNOG" id="COG0853">
    <property type="taxonomic scope" value="Bacteria"/>
</dbReference>
<dbReference type="HOGENOM" id="CLU_115305_2_0_10"/>
<dbReference type="OrthoDB" id="9803983at2"/>
<dbReference type="UniPathway" id="UPA00028">
    <property type="reaction ID" value="UER00002"/>
</dbReference>
<dbReference type="Proteomes" id="UP000008701">
    <property type="component" value="Chromosome"/>
</dbReference>
<dbReference type="GO" id="GO:0005829">
    <property type="term" value="C:cytosol"/>
    <property type="evidence" value="ECO:0007669"/>
    <property type="project" value="TreeGrafter"/>
</dbReference>
<dbReference type="GO" id="GO:0004068">
    <property type="term" value="F:aspartate 1-decarboxylase activity"/>
    <property type="evidence" value="ECO:0007669"/>
    <property type="project" value="UniProtKB-UniRule"/>
</dbReference>
<dbReference type="GO" id="GO:0006523">
    <property type="term" value="P:alanine biosynthetic process"/>
    <property type="evidence" value="ECO:0007669"/>
    <property type="project" value="InterPro"/>
</dbReference>
<dbReference type="GO" id="GO:0015940">
    <property type="term" value="P:pantothenate biosynthetic process"/>
    <property type="evidence" value="ECO:0007669"/>
    <property type="project" value="UniProtKB-UniRule"/>
</dbReference>
<dbReference type="CDD" id="cd06919">
    <property type="entry name" value="Asp_decarbox"/>
    <property type="match status" value="1"/>
</dbReference>
<dbReference type="Gene3D" id="2.40.40.20">
    <property type="match status" value="1"/>
</dbReference>
<dbReference type="HAMAP" id="MF_00446">
    <property type="entry name" value="PanD"/>
    <property type="match status" value="1"/>
</dbReference>
<dbReference type="InterPro" id="IPR009010">
    <property type="entry name" value="Asp_de-COase-like_dom_sf"/>
</dbReference>
<dbReference type="InterPro" id="IPR003190">
    <property type="entry name" value="Asp_decarbox"/>
</dbReference>
<dbReference type="NCBIfam" id="TIGR00223">
    <property type="entry name" value="panD"/>
    <property type="match status" value="1"/>
</dbReference>
<dbReference type="PANTHER" id="PTHR21012">
    <property type="entry name" value="ASPARTATE 1-DECARBOXYLASE"/>
    <property type="match status" value="1"/>
</dbReference>
<dbReference type="PANTHER" id="PTHR21012:SF0">
    <property type="entry name" value="ASPARTATE 1-DECARBOXYLASE"/>
    <property type="match status" value="1"/>
</dbReference>
<dbReference type="Pfam" id="PF02261">
    <property type="entry name" value="Asp_decarbox"/>
    <property type="match status" value="1"/>
</dbReference>
<dbReference type="PIRSF" id="PIRSF006246">
    <property type="entry name" value="Asp_decarbox"/>
    <property type="match status" value="1"/>
</dbReference>
<dbReference type="SUPFAM" id="SSF50692">
    <property type="entry name" value="ADC-like"/>
    <property type="match status" value="1"/>
</dbReference>
<organism>
    <name type="scientific">Chlorobium phaeobacteroides (strain DSM 266 / SMG 266 / 2430)</name>
    <dbReference type="NCBI Taxonomy" id="290317"/>
    <lineage>
        <taxon>Bacteria</taxon>
        <taxon>Pseudomonadati</taxon>
        <taxon>Chlorobiota</taxon>
        <taxon>Chlorobiia</taxon>
        <taxon>Chlorobiales</taxon>
        <taxon>Chlorobiaceae</taxon>
        <taxon>Chlorobium/Pelodictyon group</taxon>
        <taxon>Chlorobium</taxon>
    </lineage>
</organism>
<evidence type="ECO:0000255" key="1">
    <source>
        <dbReference type="HAMAP-Rule" id="MF_00446"/>
    </source>
</evidence>
<protein>
    <recommendedName>
        <fullName evidence="1">Aspartate 1-decarboxylase</fullName>
        <ecNumber evidence="1">4.1.1.11</ecNumber>
    </recommendedName>
    <alternativeName>
        <fullName evidence="1">Aspartate alpha-decarboxylase</fullName>
    </alternativeName>
    <component>
        <recommendedName>
            <fullName evidence="1">Aspartate 1-decarboxylase beta chain</fullName>
        </recommendedName>
    </component>
    <component>
        <recommendedName>
            <fullName evidence="1">Aspartate 1-decarboxylase alpha chain</fullName>
        </recommendedName>
    </component>
</protein>
<feature type="chain" id="PRO_0000306949" description="Aspartate 1-decarboxylase beta chain" evidence="1">
    <location>
        <begin position="1"/>
        <end position="24"/>
    </location>
</feature>
<feature type="chain" id="PRO_0000306950" description="Aspartate 1-decarboxylase alpha chain" evidence="1">
    <location>
        <begin position="25"/>
        <end position="131"/>
    </location>
</feature>
<feature type="active site" description="Schiff-base intermediate with substrate; via pyruvic acid" evidence="1">
    <location>
        <position position="25"/>
    </location>
</feature>
<feature type="active site" description="Proton donor" evidence="1">
    <location>
        <position position="58"/>
    </location>
</feature>
<feature type="binding site" evidence="1">
    <location>
        <position position="57"/>
    </location>
    <ligand>
        <name>substrate</name>
    </ligand>
</feature>
<feature type="binding site" evidence="1">
    <location>
        <begin position="73"/>
        <end position="75"/>
    </location>
    <ligand>
        <name>substrate</name>
    </ligand>
</feature>
<feature type="modified residue" description="Pyruvic acid (Ser)" evidence="1">
    <location>
        <position position="25"/>
    </location>
</feature>
<comment type="function">
    <text evidence="1">Catalyzes the pyruvoyl-dependent decarboxylation of aspartate to produce beta-alanine.</text>
</comment>
<comment type="catalytic activity">
    <reaction evidence="1">
        <text>L-aspartate + H(+) = beta-alanine + CO2</text>
        <dbReference type="Rhea" id="RHEA:19497"/>
        <dbReference type="ChEBI" id="CHEBI:15378"/>
        <dbReference type="ChEBI" id="CHEBI:16526"/>
        <dbReference type="ChEBI" id="CHEBI:29991"/>
        <dbReference type="ChEBI" id="CHEBI:57966"/>
        <dbReference type="EC" id="4.1.1.11"/>
    </reaction>
</comment>
<comment type="cofactor">
    <cofactor evidence="1">
        <name>pyruvate</name>
        <dbReference type="ChEBI" id="CHEBI:15361"/>
    </cofactor>
    <text evidence="1">Binds 1 pyruvoyl group covalently per subunit.</text>
</comment>
<comment type="pathway">
    <text evidence="1">Cofactor biosynthesis; (R)-pantothenate biosynthesis; beta-alanine from L-aspartate: step 1/1.</text>
</comment>
<comment type="subunit">
    <text evidence="1">Heterooctamer of four alpha and four beta subunits.</text>
</comment>
<comment type="subcellular location">
    <subcellularLocation>
        <location evidence="1">Cytoplasm</location>
    </subcellularLocation>
</comment>
<comment type="PTM">
    <text evidence="1">Is synthesized initially as an inactive proenzyme, which is activated by self-cleavage at a specific serine bond to produce a beta-subunit with a hydroxyl group at its C-terminus and an alpha-subunit with a pyruvoyl group at its N-terminus.</text>
</comment>
<comment type="similarity">
    <text evidence="1">Belongs to the PanD family.</text>
</comment>